<keyword id="KW-0068">Autocatalytic cleavage</keyword>
<keyword id="KW-0963">Cytoplasm</keyword>
<keyword id="KW-0210">Decarboxylase</keyword>
<keyword id="KW-0456">Lyase</keyword>
<keyword id="KW-0566">Pantothenate biosynthesis</keyword>
<keyword id="KW-0670">Pyruvate</keyword>
<keyword id="KW-0704">Schiff base</keyword>
<keyword id="KW-0865">Zymogen</keyword>
<sequence length="127" mass="14050">MIRTMMNAKIHRARVTESNLNYVGSITIDSDILEAVDILPNEKVAIVNNNNGARFETYVIAGERGSGKICLNGAASRLVEVGDVVIIMTYAQLNEEEIKNHAPKVAVMNEDNVIIEMIHEKENTIVL</sequence>
<gene>
    <name evidence="1" type="primary">panD</name>
    <name type="ordered locus">SaurJH9_2619</name>
</gene>
<protein>
    <recommendedName>
        <fullName evidence="1">Aspartate 1-decarboxylase</fullName>
        <ecNumber evidence="1">4.1.1.11</ecNumber>
    </recommendedName>
    <alternativeName>
        <fullName evidence="1">Aspartate alpha-decarboxylase</fullName>
    </alternativeName>
    <component>
        <recommendedName>
            <fullName evidence="1">Aspartate 1-decarboxylase beta chain</fullName>
        </recommendedName>
    </component>
    <component>
        <recommendedName>
            <fullName evidence="1">Aspartate 1-decarboxylase alpha chain</fullName>
        </recommendedName>
    </component>
</protein>
<reference key="1">
    <citation type="submission" date="2007-05" db="EMBL/GenBank/DDBJ databases">
        <title>Complete sequence of chromosome of Staphylococcus aureus subsp. aureus JH9.</title>
        <authorList>
            <consortium name="US DOE Joint Genome Institute"/>
            <person name="Copeland A."/>
            <person name="Lucas S."/>
            <person name="Lapidus A."/>
            <person name="Barry K."/>
            <person name="Detter J.C."/>
            <person name="Glavina del Rio T."/>
            <person name="Hammon N."/>
            <person name="Israni S."/>
            <person name="Pitluck S."/>
            <person name="Chain P."/>
            <person name="Malfatti S."/>
            <person name="Shin M."/>
            <person name="Vergez L."/>
            <person name="Schmutz J."/>
            <person name="Larimer F."/>
            <person name="Land M."/>
            <person name="Hauser L."/>
            <person name="Kyrpides N."/>
            <person name="Kim E."/>
            <person name="Tomasz A."/>
            <person name="Richardson P."/>
        </authorList>
    </citation>
    <scope>NUCLEOTIDE SEQUENCE [LARGE SCALE GENOMIC DNA]</scope>
    <source>
        <strain>JH9</strain>
    </source>
</reference>
<evidence type="ECO:0000255" key="1">
    <source>
        <dbReference type="HAMAP-Rule" id="MF_00446"/>
    </source>
</evidence>
<feature type="chain" id="PRO_1000080948" description="Aspartate 1-decarboxylase beta chain" evidence="1">
    <location>
        <begin position="1"/>
        <end position="24"/>
    </location>
</feature>
<feature type="chain" id="PRO_1000080949" description="Aspartate 1-decarboxylase alpha chain" evidence="1">
    <location>
        <begin position="25"/>
        <end position="127"/>
    </location>
</feature>
<feature type="active site" description="Schiff-base intermediate with substrate; via pyruvic acid" evidence="1">
    <location>
        <position position="25"/>
    </location>
</feature>
<feature type="active site" description="Proton donor" evidence="1">
    <location>
        <position position="58"/>
    </location>
</feature>
<feature type="binding site" evidence="1">
    <location>
        <position position="57"/>
    </location>
    <ligand>
        <name>substrate</name>
    </ligand>
</feature>
<feature type="binding site" evidence="1">
    <location>
        <begin position="73"/>
        <end position="75"/>
    </location>
    <ligand>
        <name>substrate</name>
    </ligand>
</feature>
<feature type="modified residue" description="Pyruvic acid (Ser)" evidence="1">
    <location>
        <position position="25"/>
    </location>
</feature>
<accession>A5IW22</accession>
<comment type="function">
    <text evidence="1">Catalyzes the pyruvoyl-dependent decarboxylation of aspartate to produce beta-alanine.</text>
</comment>
<comment type="catalytic activity">
    <reaction evidence="1">
        <text>L-aspartate + H(+) = beta-alanine + CO2</text>
        <dbReference type="Rhea" id="RHEA:19497"/>
        <dbReference type="ChEBI" id="CHEBI:15378"/>
        <dbReference type="ChEBI" id="CHEBI:16526"/>
        <dbReference type="ChEBI" id="CHEBI:29991"/>
        <dbReference type="ChEBI" id="CHEBI:57966"/>
        <dbReference type="EC" id="4.1.1.11"/>
    </reaction>
</comment>
<comment type="cofactor">
    <cofactor evidence="1">
        <name>pyruvate</name>
        <dbReference type="ChEBI" id="CHEBI:15361"/>
    </cofactor>
    <text evidence="1">Binds 1 pyruvoyl group covalently per subunit.</text>
</comment>
<comment type="pathway">
    <text evidence="1">Cofactor biosynthesis; (R)-pantothenate biosynthesis; beta-alanine from L-aspartate: step 1/1.</text>
</comment>
<comment type="subunit">
    <text evidence="1">Heterooctamer of four alpha and four beta subunits.</text>
</comment>
<comment type="subcellular location">
    <subcellularLocation>
        <location evidence="1">Cytoplasm</location>
    </subcellularLocation>
</comment>
<comment type="PTM">
    <text evidence="1">Is synthesized initially as an inactive proenzyme, which is activated by self-cleavage at a specific serine bond to produce a beta-subunit with a hydroxyl group at its C-terminus and an alpha-subunit with a pyruvoyl group at its N-terminus.</text>
</comment>
<comment type="similarity">
    <text evidence="1">Belongs to the PanD family.</text>
</comment>
<proteinExistence type="inferred from homology"/>
<organism>
    <name type="scientific">Staphylococcus aureus (strain JH9)</name>
    <dbReference type="NCBI Taxonomy" id="359786"/>
    <lineage>
        <taxon>Bacteria</taxon>
        <taxon>Bacillati</taxon>
        <taxon>Bacillota</taxon>
        <taxon>Bacilli</taxon>
        <taxon>Bacillales</taxon>
        <taxon>Staphylococcaceae</taxon>
        <taxon>Staphylococcus</taxon>
    </lineage>
</organism>
<name>PAND_STAA9</name>
<dbReference type="EC" id="4.1.1.11" evidence="1"/>
<dbReference type="EMBL" id="CP000703">
    <property type="protein sequence ID" value="ABQ50395.1"/>
    <property type="molecule type" value="Genomic_DNA"/>
</dbReference>
<dbReference type="RefSeq" id="WP_000621532.1">
    <property type="nucleotide sequence ID" value="NC_009487.1"/>
</dbReference>
<dbReference type="SMR" id="A5IW22"/>
<dbReference type="GeneID" id="98346911"/>
<dbReference type="KEGG" id="saj:SaurJH9_2619"/>
<dbReference type="HOGENOM" id="CLU_115305_2_0_9"/>
<dbReference type="UniPathway" id="UPA00028">
    <property type="reaction ID" value="UER00002"/>
</dbReference>
<dbReference type="GO" id="GO:0005829">
    <property type="term" value="C:cytosol"/>
    <property type="evidence" value="ECO:0007669"/>
    <property type="project" value="TreeGrafter"/>
</dbReference>
<dbReference type="GO" id="GO:0004068">
    <property type="term" value="F:aspartate 1-decarboxylase activity"/>
    <property type="evidence" value="ECO:0007669"/>
    <property type="project" value="UniProtKB-UniRule"/>
</dbReference>
<dbReference type="GO" id="GO:0006523">
    <property type="term" value="P:alanine biosynthetic process"/>
    <property type="evidence" value="ECO:0007669"/>
    <property type="project" value="InterPro"/>
</dbReference>
<dbReference type="GO" id="GO:0015940">
    <property type="term" value="P:pantothenate biosynthetic process"/>
    <property type="evidence" value="ECO:0007669"/>
    <property type="project" value="UniProtKB-UniRule"/>
</dbReference>
<dbReference type="CDD" id="cd06919">
    <property type="entry name" value="Asp_decarbox"/>
    <property type="match status" value="1"/>
</dbReference>
<dbReference type="Gene3D" id="2.40.40.20">
    <property type="match status" value="1"/>
</dbReference>
<dbReference type="HAMAP" id="MF_00446">
    <property type="entry name" value="PanD"/>
    <property type="match status" value="1"/>
</dbReference>
<dbReference type="InterPro" id="IPR009010">
    <property type="entry name" value="Asp_de-COase-like_dom_sf"/>
</dbReference>
<dbReference type="InterPro" id="IPR003190">
    <property type="entry name" value="Asp_decarbox"/>
</dbReference>
<dbReference type="NCBIfam" id="TIGR00223">
    <property type="entry name" value="panD"/>
    <property type="match status" value="1"/>
</dbReference>
<dbReference type="PANTHER" id="PTHR21012">
    <property type="entry name" value="ASPARTATE 1-DECARBOXYLASE"/>
    <property type="match status" value="1"/>
</dbReference>
<dbReference type="PANTHER" id="PTHR21012:SF0">
    <property type="entry name" value="ASPARTATE 1-DECARBOXYLASE"/>
    <property type="match status" value="1"/>
</dbReference>
<dbReference type="Pfam" id="PF02261">
    <property type="entry name" value="Asp_decarbox"/>
    <property type="match status" value="1"/>
</dbReference>
<dbReference type="PIRSF" id="PIRSF006246">
    <property type="entry name" value="Asp_decarbox"/>
    <property type="match status" value="1"/>
</dbReference>
<dbReference type="SUPFAM" id="SSF50692">
    <property type="entry name" value="ADC-like"/>
    <property type="match status" value="1"/>
</dbReference>